<gene>
    <name evidence="8" type="primary">Cplane1</name>
    <name evidence="4" type="synonym">Jbts17</name>
</gene>
<keyword id="KW-0966">Cell projection</keyword>
<keyword id="KW-0970">Cilium biogenesis/degradation</keyword>
<keyword id="KW-0472">Membrane</keyword>
<keyword id="KW-1185">Reference proteome</keyword>
<keyword id="KW-0812">Transmembrane</keyword>
<keyword id="KW-1133">Transmembrane helix</keyword>
<reference key="1">
    <citation type="journal article" date="2009" name="PLoS Biol.">
        <title>Lineage-specific biology revealed by a finished genome assembly of the mouse.</title>
        <authorList>
            <person name="Church D.M."/>
            <person name="Goodstadt L."/>
            <person name="Hillier L.W."/>
            <person name="Zody M.C."/>
            <person name="Goldstein S."/>
            <person name="She X."/>
            <person name="Bult C.J."/>
            <person name="Agarwala R."/>
            <person name="Cherry J.L."/>
            <person name="DiCuccio M."/>
            <person name="Hlavina W."/>
            <person name="Kapustin Y."/>
            <person name="Meric P."/>
            <person name="Maglott D."/>
            <person name="Birtle Z."/>
            <person name="Marques A.C."/>
            <person name="Graves T."/>
            <person name="Zhou S."/>
            <person name="Teague B."/>
            <person name="Potamousis K."/>
            <person name="Churas C."/>
            <person name="Place M."/>
            <person name="Herschleb J."/>
            <person name="Runnheim R."/>
            <person name="Forrest D."/>
            <person name="Amos-Landgraf J."/>
            <person name="Schwartz D.C."/>
            <person name="Cheng Z."/>
            <person name="Lindblad-Toh K."/>
            <person name="Eichler E.E."/>
            <person name="Ponting C.P."/>
        </authorList>
    </citation>
    <scope>NUCLEOTIDE SEQUENCE [LARGE SCALE GENOMIC DNA]</scope>
    <source>
        <strain>C57BL/6J</strain>
    </source>
</reference>
<reference key="2">
    <citation type="journal article" date="2005" name="Science">
        <title>The transcriptional landscape of the mammalian genome.</title>
        <authorList>
            <person name="Carninci P."/>
            <person name="Kasukawa T."/>
            <person name="Katayama S."/>
            <person name="Gough J."/>
            <person name="Frith M.C."/>
            <person name="Maeda N."/>
            <person name="Oyama R."/>
            <person name="Ravasi T."/>
            <person name="Lenhard B."/>
            <person name="Wells C."/>
            <person name="Kodzius R."/>
            <person name="Shimokawa K."/>
            <person name="Bajic V.B."/>
            <person name="Brenner S.E."/>
            <person name="Batalov S."/>
            <person name="Forrest A.R."/>
            <person name="Zavolan M."/>
            <person name="Davis M.J."/>
            <person name="Wilming L.G."/>
            <person name="Aidinis V."/>
            <person name="Allen J.E."/>
            <person name="Ambesi-Impiombato A."/>
            <person name="Apweiler R."/>
            <person name="Aturaliya R.N."/>
            <person name="Bailey T.L."/>
            <person name="Bansal M."/>
            <person name="Baxter L."/>
            <person name="Beisel K.W."/>
            <person name="Bersano T."/>
            <person name="Bono H."/>
            <person name="Chalk A.M."/>
            <person name="Chiu K.P."/>
            <person name="Choudhary V."/>
            <person name="Christoffels A."/>
            <person name="Clutterbuck D.R."/>
            <person name="Crowe M.L."/>
            <person name="Dalla E."/>
            <person name="Dalrymple B.P."/>
            <person name="de Bono B."/>
            <person name="Della Gatta G."/>
            <person name="di Bernardo D."/>
            <person name="Down T."/>
            <person name="Engstrom P."/>
            <person name="Fagiolini M."/>
            <person name="Faulkner G."/>
            <person name="Fletcher C.F."/>
            <person name="Fukushima T."/>
            <person name="Furuno M."/>
            <person name="Futaki S."/>
            <person name="Gariboldi M."/>
            <person name="Georgii-Hemming P."/>
            <person name="Gingeras T.R."/>
            <person name="Gojobori T."/>
            <person name="Green R.E."/>
            <person name="Gustincich S."/>
            <person name="Harbers M."/>
            <person name="Hayashi Y."/>
            <person name="Hensch T.K."/>
            <person name="Hirokawa N."/>
            <person name="Hill D."/>
            <person name="Huminiecki L."/>
            <person name="Iacono M."/>
            <person name="Ikeo K."/>
            <person name="Iwama A."/>
            <person name="Ishikawa T."/>
            <person name="Jakt M."/>
            <person name="Kanapin A."/>
            <person name="Katoh M."/>
            <person name="Kawasawa Y."/>
            <person name="Kelso J."/>
            <person name="Kitamura H."/>
            <person name="Kitano H."/>
            <person name="Kollias G."/>
            <person name="Krishnan S.P."/>
            <person name="Kruger A."/>
            <person name="Kummerfeld S.K."/>
            <person name="Kurochkin I.V."/>
            <person name="Lareau L.F."/>
            <person name="Lazarevic D."/>
            <person name="Lipovich L."/>
            <person name="Liu J."/>
            <person name="Liuni S."/>
            <person name="McWilliam S."/>
            <person name="Madan Babu M."/>
            <person name="Madera M."/>
            <person name="Marchionni L."/>
            <person name="Matsuda H."/>
            <person name="Matsuzawa S."/>
            <person name="Miki H."/>
            <person name="Mignone F."/>
            <person name="Miyake S."/>
            <person name="Morris K."/>
            <person name="Mottagui-Tabar S."/>
            <person name="Mulder N."/>
            <person name="Nakano N."/>
            <person name="Nakauchi H."/>
            <person name="Ng P."/>
            <person name="Nilsson R."/>
            <person name="Nishiguchi S."/>
            <person name="Nishikawa S."/>
            <person name="Nori F."/>
            <person name="Ohara O."/>
            <person name="Okazaki Y."/>
            <person name="Orlando V."/>
            <person name="Pang K.C."/>
            <person name="Pavan W.J."/>
            <person name="Pavesi G."/>
            <person name="Pesole G."/>
            <person name="Petrovsky N."/>
            <person name="Piazza S."/>
            <person name="Reed J."/>
            <person name="Reid J.F."/>
            <person name="Ring B.Z."/>
            <person name="Ringwald M."/>
            <person name="Rost B."/>
            <person name="Ruan Y."/>
            <person name="Salzberg S.L."/>
            <person name="Sandelin A."/>
            <person name="Schneider C."/>
            <person name="Schoenbach C."/>
            <person name="Sekiguchi K."/>
            <person name="Semple C.A."/>
            <person name="Seno S."/>
            <person name="Sessa L."/>
            <person name="Sheng Y."/>
            <person name="Shibata Y."/>
            <person name="Shimada H."/>
            <person name="Shimada K."/>
            <person name="Silva D."/>
            <person name="Sinclair B."/>
            <person name="Sperling S."/>
            <person name="Stupka E."/>
            <person name="Sugiura K."/>
            <person name="Sultana R."/>
            <person name="Takenaka Y."/>
            <person name="Taki K."/>
            <person name="Tammoja K."/>
            <person name="Tan S.L."/>
            <person name="Tang S."/>
            <person name="Taylor M.S."/>
            <person name="Tegner J."/>
            <person name="Teichmann S.A."/>
            <person name="Ueda H.R."/>
            <person name="van Nimwegen E."/>
            <person name="Verardo R."/>
            <person name="Wei C.L."/>
            <person name="Yagi K."/>
            <person name="Yamanishi H."/>
            <person name="Zabarovsky E."/>
            <person name="Zhu S."/>
            <person name="Zimmer A."/>
            <person name="Hide W."/>
            <person name="Bult C."/>
            <person name="Grimmond S.M."/>
            <person name="Teasdale R.D."/>
            <person name="Liu E.T."/>
            <person name="Brusic V."/>
            <person name="Quackenbush J."/>
            <person name="Wahlestedt C."/>
            <person name="Mattick J.S."/>
            <person name="Hume D.A."/>
            <person name="Kai C."/>
            <person name="Sasaki D."/>
            <person name="Tomaru Y."/>
            <person name="Fukuda S."/>
            <person name="Kanamori-Katayama M."/>
            <person name="Suzuki M."/>
            <person name="Aoki J."/>
            <person name="Arakawa T."/>
            <person name="Iida J."/>
            <person name="Imamura K."/>
            <person name="Itoh M."/>
            <person name="Kato T."/>
            <person name="Kawaji H."/>
            <person name="Kawagashira N."/>
            <person name="Kawashima T."/>
            <person name="Kojima M."/>
            <person name="Kondo S."/>
            <person name="Konno H."/>
            <person name="Nakano K."/>
            <person name="Ninomiya N."/>
            <person name="Nishio T."/>
            <person name="Okada M."/>
            <person name="Plessy C."/>
            <person name="Shibata K."/>
            <person name="Shiraki T."/>
            <person name="Suzuki S."/>
            <person name="Tagami M."/>
            <person name="Waki K."/>
            <person name="Watahiki A."/>
            <person name="Okamura-Oho Y."/>
            <person name="Suzuki H."/>
            <person name="Kawai J."/>
            <person name="Hayashizaki Y."/>
        </authorList>
    </citation>
    <scope>NUCLEOTIDE SEQUENCE [LARGE SCALE MRNA] OF 1-1087</scope>
    <source>
        <strain>C57BL/6J</strain>
        <tissue>Olfactory bulb</tissue>
        <tissue>Skin</tissue>
    </source>
</reference>
<reference key="3">
    <citation type="journal article" date="2004" name="Genome Res.">
        <title>The status, quality, and expansion of the NIH full-length cDNA project: the Mammalian Gene Collection (MGC).</title>
        <authorList>
            <consortium name="The MGC Project Team"/>
        </authorList>
    </citation>
    <scope>NUCLEOTIDE SEQUENCE [LARGE SCALE MRNA] OF 1813-3214</scope>
</reference>
<reference key="4">
    <citation type="journal article" date="2015" name="Hum. Mol. Genet.">
        <title>Novel Jbts17 mutant mouse model of Joubert syndrome with cilia transition zone defects and cerebellar and other ciliopathy related anomalies.</title>
        <authorList>
            <person name="Damerla R.R."/>
            <person name="Cui C."/>
            <person name="Gabriel G.C."/>
            <person name="Liu X."/>
            <person name="Craige B."/>
            <person name="Gibbs B.C."/>
            <person name="Francis R."/>
            <person name="Li Y."/>
            <person name="Chatterjee B."/>
            <person name="San Agustin J.T."/>
            <person name="Eguether T."/>
            <person name="Subramanian R."/>
            <person name="Witman G.B."/>
            <person name="Michaud J.L."/>
            <person name="Pazour G.J."/>
            <person name="Lo C.W."/>
        </authorList>
    </citation>
    <scope>FUNCTION</scope>
    <scope>SUBCELLULAR LOCATION</scope>
    <scope>VARIANT HUG PRO-253</scope>
</reference>
<reference key="5">
    <citation type="journal article" date="2016" name="Nat. Genet.">
        <title>The ciliopathy-associated CPLANE proteins direct basal body recruitment of intraflagellar transport machinery.</title>
        <authorList>
            <person name="Toriyama M."/>
            <person name="Lee C."/>
            <person name="Taylor S.P."/>
            <person name="Duran I."/>
            <person name="Cohn D.H."/>
            <person name="Bruel A.L."/>
            <person name="Tabler J.M."/>
            <person name="Drew K."/>
            <person name="Kelly M.R."/>
            <person name="Kim S."/>
            <person name="Park T.J."/>
            <person name="Braun D.A."/>
            <person name="Pierquin G."/>
            <person name="Biver A."/>
            <person name="Wagner K."/>
            <person name="Malfroot A."/>
            <person name="Panigrahi I."/>
            <person name="Franco B."/>
            <person name="Al-Lami H.A."/>
            <person name="Yeung Y."/>
            <person name="Choi Y.J."/>
            <person name="Duffourd Y."/>
            <person name="Faivre L."/>
            <person name="Riviere J.B."/>
            <person name="Chen J."/>
            <person name="Liu K.J."/>
            <person name="Marcotte E.M."/>
            <person name="Hildebrandt F."/>
            <person name="Thauvin-Robinet C."/>
            <person name="Krakow D."/>
            <person name="Jackson P.K."/>
            <person name="Wallingford J.B."/>
        </authorList>
    </citation>
    <scope>FUNCTION</scope>
    <scope>INTERACTION WITH FUZ; INTU AND WDPCP</scope>
</reference>
<name>CPLN1_MOUSE</name>
<feature type="chain" id="PRO_0000344366" description="Ciliogenesis and planar polarity effector 1">
    <location>
        <begin position="1"/>
        <end position="3214"/>
    </location>
</feature>
<feature type="transmembrane region" description="Helical" evidence="1">
    <location>
        <begin position="593"/>
        <end position="613"/>
    </location>
</feature>
<feature type="transmembrane region" description="Helical" evidence="1">
    <location>
        <begin position="632"/>
        <end position="652"/>
    </location>
</feature>
<feature type="region of interest" description="Disordered" evidence="2">
    <location>
        <begin position="1496"/>
        <end position="1523"/>
    </location>
</feature>
<feature type="region of interest" description="Disordered" evidence="2">
    <location>
        <begin position="1644"/>
        <end position="1667"/>
    </location>
</feature>
<feature type="region of interest" description="Disordered" evidence="2">
    <location>
        <begin position="1879"/>
        <end position="1991"/>
    </location>
</feature>
<feature type="region of interest" description="Disordered" evidence="2">
    <location>
        <begin position="2047"/>
        <end position="2142"/>
    </location>
</feature>
<feature type="region of interest" description="Disordered" evidence="2">
    <location>
        <begin position="2214"/>
        <end position="2241"/>
    </location>
</feature>
<feature type="region of interest" description="Disordered" evidence="2">
    <location>
        <begin position="2398"/>
        <end position="2440"/>
    </location>
</feature>
<feature type="region of interest" description="Disordered" evidence="2">
    <location>
        <begin position="2491"/>
        <end position="2529"/>
    </location>
</feature>
<feature type="region of interest" description="Disordered" evidence="2">
    <location>
        <begin position="2622"/>
        <end position="2650"/>
    </location>
</feature>
<feature type="region of interest" description="Disordered" evidence="2">
    <location>
        <begin position="2824"/>
        <end position="2855"/>
    </location>
</feature>
<feature type="region of interest" description="Disordered" evidence="2">
    <location>
        <begin position="3037"/>
        <end position="3127"/>
    </location>
</feature>
<feature type="region of interest" description="Disordered" evidence="2">
    <location>
        <begin position="3158"/>
        <end position="3181"/>
    </location>
</feature>
<feature type="compositionally biased region" description="Basic and acidic residues" evidence="2">
    <location>
        <begin position="1512"/>
        <end position="1523"/>
    </location>
</feature>
<feature type="compositionally biased region" description="Basic and acidic residues" evidence="2">
    <location>
        <begin position="1932"/>
        <end position="1942"/>
    </location>
</feature>
<feature type="compositionally biased region" description="Polar residues" evidence="2">
    <location>
        <begin position="1943"/>
        <end position="1953"/>
    </location>
</feature>
<feature type="compositionally biased region" description="Polar residues" evidence="2">
    <location>
        <begin position="1971"/>
        <end position="1984"/>
    </location>
</feature>
<feature type="compositionally biased region" description="Polar residues" evidence="2">
    <location>
        <begin position="2047"/>
        <end position="2068"/>
    </location>
</feature>
<feature type="compositionally biased region" description="Basic and acidic residues" evidence="2">
    <location>
        <begin position="2079"/>
        <end position="2099"/>
    </location>
</feature>
<feature type="compositionally biased region" description="Polar residues" evidence="2">
    <location>
        <begin position="2215"/>
        <end position="2241"/>
    </location>
</feature>
<feature type="compositionally biased region" description="Basic and acidic residues" evidence="2">
    <location>
        <begin position="2500"/>
        <end position="2514"/>
    </location>
</feature>
<feature type="compositionally biased region" description="Polar residues" evidence="2">
    <location>
        <begin position="2515"/>
        <end position="2524"/>
    </location>
</feature>
<feature type="compositionally biased region" description="Polar residues" evidence="2">
    <location>
        <begin position="2622"/>
        <end position="2634"/>
    </location>
</feature>
<feature type="compositionally biased region" description="Acidic residues" evidence="2">
    <location>
        <begin position="2830"/>
        <end position="2848"/>
    </location>
</feature>
<feature type="compositionally biased region" description="Polar residues" evidence="2">
    <location>
        <begin position="3090"/>
        <end position="3107"/>
    </location>
</feature>
<feature type="sequence variant" description="In Hug." evidence="3">
    <original>S</original>
    <variation>P</variation>
    <location>
        <position position="253"/>
    </location>
</feature>
<feature type="sequence conflict" description="In Ref. 2; BAC26182." evidence="6" ref="2">
    <original>E</original>
    <variation>K</variation>
    <location>
        <position position="1061"/>
    </location>
</feature>
<comment type="function">
    <text evidence="3 7">Involved in ciliogenesis. Involved in the establishment of cell polarity required for directional cell migration (PubMed:25877302). Proposed to act in association with the CPLANE (ciliogenesis and planar polarity effectors) complex. Involved in recruitment of peripheral IFT-A proteins to basal bodies (PubMed:27158779).</text>
</comment>
<comment type="subunit">
    <text>Interacts with FUZ; INTU and WDPCP; the interactors are proposed to form the core CPLANE (ciliogenesis and planar polarity effectors) complex (PubMed:27158779).</text>
</comment>
<comment type="subcellular location">
    <subcellularLocation>
        <location evidence="6">Membrane</location>
        <topology evidence="6">Multi-pass membrane protein</topology>
    </subcellularLocation>
    <subcellularLocation>
        <location evidence="3">Cell projection</location>
        <location evidence="3">Cilium</location>
    </subcellularLocation>
    <text evidence="3">Localizes to the ciliary transition zone.</text>
</comment>
<comment type="disease">
    <text evidence="3">Defects in Jbts17 are the cause of the Hug (Heart under glass) phenotype which is a model of Joubert syndrome. Hug mice die prenatally and show skelatal dysplasia, craniofacial defects, polydactyly, cystic kidney, cerebellar hypoplasia and congenital heart defects of varying degrees. Most severely affected mutants die at mid-gestation with a transparent chest wall due to complete failure to form the rib cage. The phenotype is consistent with the spectrum of MKS-BBS-Joubert syndrome phenotypes.</text>
</comment>
<comment type="sequence caution" evidence="6">
    <conflict type="erroneous initiation">
        <sequence resource="EMBL-CDS" id="AAH58107"/>
    </conflict>
    <text>Truncated N-terminus.</text>
</comment>
<comment type="sequence caution" evidence="6">
    <conflict type="miscellaneous discrepancy">
        <sequence resource="EMBL-CDS" id="BAE22427"/>
    </conflict>
    <text>Contaminating sequence. Intron sequences at both 5' and 3' ends.</text>
</comment>
<organism>
    <name type="scientific">Mus musculus</name>
    <name type="common">Mouse</name>
    <dbReference type="NCBI Taxonomy" id="10090"/>
    <lineage>
        <taxon>Eukaryota</taxon>
        <taxon>Metazoa</taxon>
        <taxon>Chordata</taxon>
        <taxon>Craniata</taxon>
        <taxon>Vertebrata</taxon>
        <taxon>Euteleostomi</taxon>
        <taxon>Mammalia</taxon>
        <taxon>Eutheria</taxon>
        <taxon>Euarchontoglires</taxon>
        <taxon>Glires</taxon>
        <taxon>Rodentia</taxon>
        <taxon>Myomorpha</taxon>
        <taxon>Muroidea</taxon>
        <taxon>Muridae</taxon>
        <taxon>Murinae</taxon>
        <taxon>Mus</taxon>
        <taxon>Mus</taxon>
    </lineage>
</organism>
<dbReference type="EMBL" id="AC107747">
    <property type="status" value="NOT_ANNOTATED_CDS"/>
    <property type="molecule type" value="Genomic_DNA"/>
</dbReference>
<dbReference type="EMBL" id="AC158971">
    <property type="status" value="NOT_ANNOTATED_CDS"/>
    <property type="molecule type" value="Genomic_DNA"/>
</dbReference>
<dbReference type="EMBL" id="AK028897">
    <property type="protein sequence ID" value="BAC26182.2"/>
    <property type="molecule type" value="mRNA"/>
</dbReference>
<dbReference type="EMBL" id="AK135113">
    <property type="protein sequence ID" value="BAE22427.1"/>
    <property type="status" value="ALT_SEQ"/>
    <property type="molecule type" value="mRNA"/>
</dbReference>
<dbReference type="EMBL" id="BC058107">
    <property type="protein sequence ID" value="AAH58107.1"/>
    <property type="status" value="ALT_INIT"/>
    <property type="molecule type" value="mRNA"/>
</dbReference>
<dbReference type="CCDS" id="CCDS49578.1"/>
<dbReference type="RefSeq" id="NP_001156378.1">
    <property type="nucleotide sequence ID" value="NM_001162906.2"/>
</dbReference>
<dbReference type="BioGRID" id="216193">
    <property type="interactions" value="4"/>
</dbReference>
<dbReference type="FunCoup" id="Q8CE72">
    <property type="interactions" value="333"/>
</dbReference>
<dbReference type="IntAct" id="Q8CE72">
    <property type="interactions" value="1"/>
</dbReference>
<dbReference type="STRING" id="10090.ENSMUSP00000106247"/>
<dbReference type="GlyGen" id="Q8CE72">
    <property type="glycosylation" value="4 sites"/>
</dbReference>
<dbReference type="iPTMnet" id="Q8CE72"/>
<dbReference type="PhosphoSitePlus" id="Q8CE72"/>
<dbReference type="PaxDb" id="10090-ENSMUSP00000106247"/>
<dbReference type="ProteomicsDB" id="281570"/>
<dbReference type="Antibodypedia" id="51274">
    <property type="antibodies" value="42 antibodies from 7 providers"/>
</dbReference>
<dbReference type="Ensembl" id="ENSMUST00000110617.2">
    <property type="protein sequence ID" value="ENSMUSP00000106247.2"/>
    <property type="gene ID" value="ENSMUSG00000039801.8"/>
</dbReference>
<dbReference type="GeneID" id="73692"/>
<dbReference type="KEGG" id="mmu:73692"/>
<dbReference type="UCSC" id="uc007ven.2">
    <property type="organism name" value="mouse"/>
</dbReference>
<dbReference type="AGR" id="MGI:1920942"/>
<dbReference type="CTD" id="65250"/>
<dbReference type="MGI" id="MGI:1920942">
    <property type="gene designation" value="Cplane1"/>
</dbReference>
<dbReference type="VEuPathDB" id="HostDB:ENSMUSG00000039801"/>
<dbReference type="eggNOG" id="ENOG502QRD2">
    <property type="taxonomic scope" value="Eukaryota"/>
</dbReference>
<dbReference type="GeneTree" id="ENSGT00800000124150"/>
<dbReference type="HOGENOM" id="CLU_226347_0_0_1"/>
<dbReference type="InParanoid" id="Q8CE72"/>
<dbReference type="OMA" id="QYWDVRY"/>
<dbReference type="OrthoDB" id="5974632at2759"/>
<dbReference type="PhylomeDB" id="Q8CE72"/>
<dbReference type="TreeFam" id="TF351288"/>
<dbReference type="BioGRID-ORCS" id="73692">
    <property type="hits" value="4 hits in 78 CRISPR screens"/>
</dbReference>
<dbReference type="ChiTaRS" id="Cplane1">
    <property type="organism name" value="mouse"/>
</dbReference>
<dbReference type="PRO" id="PR:Q8CE72"/>
<dbReference type="Proteomes" id="UP000000589">
    <property type="component" value="Chromosome 15"/>
</dbReference>
<dbReference type="RNAct" id="Q8CE72">
    <property type="molecule type" value="protein"/>
</dbReference>
<dbReference type="Bgee" id="ENSMUSG00000039801">
    <property type="expression patterns" value="Expressed in humerus cartilage element and 220 other cell types or tissues"/>
</dbReference>
<dbReference type="ExpressionAtlas" id="Q8CE72">
    <property type="expression patterns" value="baseline and differential"/>
</dbReference>
<dbReference type="GO" id="GO:0035869">
    <property type="term" value="C:ciliary transition zone"/>
    <property type="evidence" value="ECO:0000314"/>
    <property type="project" value="MGI"/>
</dbReference>
<dbReference type="GO" id="GO:0016020">
    <property type="term" value="C:membrane"/>
    <property type="evidence" value="ECO:0007669"/>
    <property type="project" value="UniProtKB-SubCell"/>
</dbReference>
<dbReference type="GO" id="GO:0003279">
    <property type="term" value="P:cardiac septum development"/>
    <property type="evidence" value="ECO:0000315"/>
    <property type="project" value="MGI"/>
</dbReference>
<dbReference type="GO" id="GO:0021549">
    <property type="term" value="P:cerebellum development"/>
    <property type="evidence" value="ECO:0000315"/>
    <property type="project" value="MGI"/>
</dbReference>
<dbReference type="GO" id="GO:0060271">
    <property type="term" value="P:cilium assembly"/>
    <property type="evidence" value="ECO:0000315"/>
    <property type="project" value="MGI"/>
</dbReference>
<dbReference type="GO" id="GO:0060976">
    <property type="term" value="P:coronary vasculature development"/>
    <property type="evidence" value="ECO:0000315"/>
    <property type="project" value="MGI"/>
</dbReference>
<dbReference type="GO" id="GO:0042733">
    <property type="term" value="P:embryonic digit morphogenesis"/>
    <property type="evidence" value="ECO:0000315"/>
    <property type="project" value="MGI"/>
</dbReference>
<dbReference type="GO" id="GO:0001736">
    <property type="term" value="P:establishment of planar polarity"/>
    <property type="evidence" value="ECO:0000315"/>
    <property type="project" value="MGI"/>
</dbReference>
<dbReference type="GO" id="GO:0007507">
    <property type="term" value="P:heart development"/>
    <property type="evidence" value="ECO:0000315"/>
    <property type="project" value="MGI"/>
</dbReference>
<dbReference type="GO" id="GO:0001822">
    <property type="term" value="P:kidney development"/>
    <property type="evidence" value="ECO:0000315"/>
    <property type="project" value="MGI"/>
</dbReference>
<dbReference type="GO" id="GO:1904491">
    <property type="term" value="P:protein localization to ciliary transition zone"/>
    <property type="evidence" value="ECO:0000315"/>
    <property type="project" value="MGI"/>
</dbReference>
<dbReference type="GO" id="GO:0060021">
    <property type="term" value="P:roof of mouth development"/>
    <property type="evidence" value="ECO:0000315"/>
    <property type="project" value="MGI"/>
</dbReference>
<dbReference type="GO" id="GO:0003281">
    <property type="term" value="P:ventricular septum development"/>
    <property type="evidence" value="ECO:0000315"/>
    <property type="project" value="MGI"/>
</dbReference>
<dbReference type="InterPro" id="IPR028236">
    <property type="entry name" value="CPLANE1"/>
</dbReference>
<dbReference type="PANTHER" id="PTHR14492:SF4">
    <property type="entry name" value="CILIOGENESIS AND PLANAR POLARITY EFFECTOR 1"/>
    <property type="match status" value="1"/>
</dbReference>
<dbReference type="PANTHER" id="PTHR14492">
    <property type="entry name" value="JBTS17"/>
    <property type="match status" value="1"/>
</dbReference>
<dbReference type="Pfam" id="PF15392">
    <property type="entry name" value="Joubert"/>
    <property type="match status" value="1"/>
</dbReference>
<evidence type="ECO:0000255" key="1"/>
<evidence type="ECO:0000256" key="2">
    <source>
        <dbReference type="SAM" id="MobiDB-lite"/>
    </source>
</evidence>
<evidence type="ECO:0000269" key="3">
    <source>
    </source>
</evidence>
<evidence type="ECO:0000303" key="4">
    <source>
    </source>
</evidence>
<evidence type="ECO:0000303" key="5">
    <source>
    </source>
</evidence>
<evidence type="ECO:0000305" key="6"/>
<evidence type="ECO:0000305" key="7">
    <source>
    </source>
</evidence>
<evidence type="ECO:0000312" key="8">
    <source>
        <dbReference type="MGI" id="MGI:1920942"/>
    </source>
</evidence>
<sequence length="3214" mass="358550">MEMRLEVLTSTSIKQKKPWPRVSWLGQENEAVFLLDEKFINEINLLSGRTKKKIPSLQPLLKDVVFLATSTNDVWLSGVLTTGELFLWNKDQDCLKKIHVTEKPKEAIKAAVASSSRLYLYVAENGKRILLITSSGCILLWEYLELKNILSSKSLSLVGQWSQIVPEEAVSLPSTKDKEAVVAAVFVKNELLGDCCLCSFTFYSGECLKLTFLDIQWYENIFTSVRSLLFRVHWAQQECPLCSLIPRCASVKSRGALISAFSRDGLALAVTLNQKDPTATQVLFINTLNFVTLCGGLKGCSNKNPVVPATLTRSYWVGDISWTHDSLFLTCVLKRGSLVLLTCLGELLTLVTFGCSIEFGPAEFIPLHPLITYRPQQLPFQDSNNCVDSSASESDPLRQRFSIKAHSRLPYLIISDGYMVTTLRFLDNQSPTMLMRSLLLDSTQRLEKAYQSMMLSEPKDKGLNFRSLDSLRSSLLKHQGKESSVHCTVPRFLQAEETMKLNETTDFQDFEGEETNEVEQFVNNSFSFCNQKKDLPFDIVKEGRLEFASMFDTVHAKDASKETDRNTAELHRIQKTLLAAWTIGISKNVTEKKLMLNYTILCITHFFYILQFIKCPVPKFDLFLNKSLKRNAWVLCVFQLFHQCLSVHYWDMRYRQNMGHLIRLTANTVKLLLTQRQEHGSFSERLLACLSLLRTVTVHLNGTCSLQPEAVPAAADESRPAELDSLMVPIFQASKENWPWDSSLKIYPQVTNLVQKPGHRLIALWRLLYKKTLWYQAQLSQRTPDGDRRLTENIRHEVSVVKTLLCHVQTNLQMAGDSLNQALELTPISGEECFLLASYEKSVCLWKKALQETQEKGGRRTCFLQLRYYLSLLYCHLYCYNLNDAQGLCDHLVRELLSRSQLPVRESQDCSDCEIAVTGNVHPEAALRVVQCMARFMAAYFTNEPLFILPPHSVSVLPPLHVKTEHSLRLIPLQHSKVASVIRDQNLSNVWTVEYTLELLFIGGLIPEAVWMAHKLGDWKTSVSIGVAYQVFCKHDCNFARSKKKGMDLPLNMIPAQIFQEKLQCFLGQPVSLTKKNEKGSKYKQFTDPIEEEDASLLFGSVQEVLKASVMADADIVSETLQLLMDSAKDFSKKLWGLVPVDLYLPAPPLYCPQPAVLSEEHGDNLLLKAEKDNRQKLSGILQRVLLLFRASRCSFPVAQWYILQLRWARKVMQKIRVKGSLPSLGSFPESLLNYCKGGIAFFRPGATGDHTLDEVSIKALGCFRELCALCWMLHVRDKLSYTCRQYQKARENTKIEKDLEVGFDSCVVEHCFHALEWACRMLPFSRFFNMEELIQDIILSLIGELPPIRKVAEIFVKAFPNPEAIRVPLREKYHSLQQKLKHGVVKGPQTEELMSTVMRHVRKVRVKALKRVQRNIGAFEMDIWEPDEEDKPAATPAADRFSLGPSVSSTLTLDLGSSLLHSDADTFSETLSLEEKTWIHLYQRHTPSHMELALVGKKPSDKKKVSNQKENSQRKEDDETPGKEALPVIGVWEFERDDDEYISFLELFLSYILERDLCSSDPGIPFLTSFSGRLREHELNSLLFDVHTTLKRRQSKTISENVYRAGSCFAVTPESQEPENLSSLNSVGARHFESQALSASALGNQSGSTLENPLQSGSTSENPLQSDVMNWERRAGLFGLKQKPMYRVPDDKREKPTVQRSSNHSFWVPESIKPGRHRFRALEGSAGPPREDLPLALQSMFGDAGRLVEWMIRWSDRRLLCDPGVTPSSCKYSPVIRVKTSTAAILTSLWLLEQPYSAAYTAKNGIIKVLERHHTEPQVAAERESDVDADCPAAVAAQEGTECWNRMPAEAENHDVKDTGDEIAPVTPGSERELVHADGRHSEAGSSTQDEMDVHISDSEEGPVESLRGPSAVICRPESQLSSEHSEEEAQCSRKEPRDASVDTNLTEQKGAQISDLKEKSPTVLPLMSNGAQDTSQTPQKTQGNEHRAQLPDASESVRQMLQDEMFKLVQLQQINFLSLMQIVGPSVASLPDMHGLLQQAQSVRFGESQVSNSTKSDCIEVNSRQRVSARAQSMGECTREPGKNSPADHKRISRPDQDSSGDTQDIPHGSVPLCQLDGQPEVRGQTGAPRSFAPASFPPAPAADSGLQLLFTPAAIQKTPQLIPPARAGAPGRGFPLLHFQPKRDFKPLSLPVGRIPQVSFRPQAQPKEAWSLSDSCQPPVSQRTVHTTLPSPSDSSHCNAEAMRKAEAVLTGIPKHVNMGQYAGQGYLTPQQDSSVFIKPENVFDVKPSPPETALQNSFGLPLLHLQFKPPYVFSAPPRAFSRFPSVPGTEGRNQPQLSLLHPCLPPENTYKKPQLIPLENLLAFKRSQQKLAHSVSGQGDAAPHFVGVSMDAAGITQGKQRQSRRAKRELQEGRAQKPRRKPNVSFRPEDSLISNDSEVIIEPKEQLGHHDSQHLDKFDIPFEMLEDDINTSAGLHFMASVRKKAVGSHDASTNTDPDKEGPSQKADSESSKNPQATAASSGHEPLKVPQLLIPDIYLNVRLPSGIAEKPLSPSPPHMAGHKYIDVVDIEADDLLGLPACEEPSDEVTKQQSHPPHAPSSAELHCMAASIVDAAPPHTFQSQESASSTRGLISEPAKVTQSCQSGESWRKSVIEAKEPEIPSVAPPSDRQQDRDILEQNFQFKEQSTKLDSVGQSLLWTLLQNASPACPTPSPAVCPRPSSPACPPPSPAVCPPPSPAACPTPSPAAQKFEHLTAKLQEMDEQLVAVQTMAENIEQDFPASQVLNLHWEKAGLGNHVGLSSGPDIEKLLASKAISISEEVSLQTQEDVEEQKDAEETSETEFSEAENHSSQKTYACPSVGSAACSSVGWNIPSPGLNDSNELLESGSEDQLQVTGLTDIADIIGDLITKSGVSSHELGLTECQARSISRIQRPPDRGPRRTAEERREIKAWMRRKQKERMSEYLGQLAERRGRERNPFCPTSSPFYMTSRQIRQRQKMKREKDRLQLSKHYSQRLSQAYSLMNELLSDSAHITAPAENPLPPGPYRRQRGSSPKRENAHGQSLPVNRPGGDRHISRSSHLCKGQPRGSSQLRGSQPPCQSQKPLRSRGAAGVGPPVQQACREDEREEMVVSPWTLPSEIHRILHGRPESLLQDMSPADEEEPEPPLLAGGMDSVSESTGSILSKLDWKAVEDMVASVEDKNLSVHWALDQ</sequence>
<accession>Q8CE72</accession>
<accession>E9QL36</accession>
<accession>Q3UXY6</accession>
<accession>Q6PEE0</accession>
<protein>
    <recommendedName>
        <fullName evidence="6">Ciliogenesis and planar polarity effector 1</fullName>
    </recommendedName>
    <alternativeName>
        <fullName>Protein C5orf42 homolog</fullName>
    </alternativeName>
    <alternativeName>
        <fullName evidence="4 5">Protein JBTS17</fullName>
    </alternativeName>
</protein>
<proteinExistence type="evidence at protein level"/>